<comment type="function">
    <text evidence="1">Catalyzes the formation of S-adenosylmethionine (AdoMet) from methionine and ATP. The overall synthetic reaction is composed of two sequential steps, AdoMet formation and the subsequent tripolyphosphate hydrolysis which occurs prior to release of AdoMet from the enzyme.</text>
</comment>
<comment type="catalytic activity">
    <reaction evidence="1">
        <text>L-methionine + ATP + H2O = S-adenosyl-L-methionine + phosphate + diphosphate</text>
        <dbReference type="Rhea" id="RHEA:21080"/>
        <dbReference type="ChEBI" id="CHEBI:15377"/>
        <dbReference type="ChEBI" id="CHEBI:30616"/>
        <dbReference type="ChEBI" id="CHEBI:33019"/>
        <dbReference type="ChEBI" id="CHEBI:43474"/>
        <dbReference type="ChEBI" id="CHEBI:57844"/>
        <dbReference type="ChEBI" id="CHEBI:59789"/>
        <dbReference type="EC" id="2.5.1.6"/>
    </reaction>
</comment>
<comment type="cofactor">
    <cofactor evidence="1">
        <name>Mg(2+)</name>
        <dbReference type="ChEBI" id="CHEBI:18420"/>
    </cofactor>
    <text evidence="1">Binds 2 divalent ions per subunit.</text>
</comment>
<comment type="cofactor">
    <cofactor evidence="1">
        <name>K(+)</name>
        <dbReference type="ChEBI" id="CHEBI:29103"/>
    </cofactor>
    <text evidence="1">Binds 1 potassium ion per subunit.</text>
</comment>
<comment type="pathway">
    <text evidence="1">Amino-acid biosynthesis; S-adenosyl-L-methionine biosynthesis; S-adenosyl-L-methionine from L-methionine: step 1/1.</text>
</comment>
<comment type="subunit">
    <text evidence="1">Homotetramer; dimer of dimers.</text>
</comment>
<comment type="subcellular location">
    <subcellularLocation>
        <location evidence="1">Cytoplasm</location>
    </subcellularLocation>
</comment>
<comment type="similarity">
    <text evidence="1">Belongs to the AdoMet synthase family.</text>
</comment>
<keyword id="KW-0067">ATP-binding</keyword>
<keyword id="KW-0963">Cytoplasm</keyword>
<keyword id="KW-0460">Magnesium</keyword>
<keyword id="KW-0479">Metal-binding</keyword>
<keyword id="KW-0547">Nucleotide-binding</keyword>
<keyword id="KW-0554">One-carbon metabolism</keyword>
<keyword id="KW-0630">Potassium</keyword>
<keyword id="KW-1185">Reference proteome</keyword>
<keyword id="KW-0808">Transferase</keyword>
<name>METK_STRR6</name>
<evidence type="ECO:0000255" key="1">
    <source>
        <dbReference type="HAMAP-Rule" id="MF_00086"/>
    </source>
</evidence>
<reference key="1">
    <citation type="journal article" date="2001" name="J. Bacteriol.">
        <title>Genome of the bacterium Streptococcus pneumoniae strain R6.</title>
        <authorList>
            <person name="Hoskins J."/>
            <person name="Alborn W.E. Jr."/>
            <person name="Arnold J."/>
            <person name="Blaszczak L.C."/>
            <person name="Burgett S."/>
            <person name="DeHoff B.S."/>
            <person name="Estrem S.T."/>
            <person name="Fritz L."/>
            <person name="Fu D.-J."/>
            <person name="Fuller W."/>
            <person name="Geringer C."/>
            <person name="Gilmour R."/>
            <person name="Glass J.S."/>
            <person name="Khoja H."/>
            <person name="Kraft A.R."/>
            <person name="Lagace R.E."/>
            <person name="LeBlanc D.J."/>
            <person name="Lee L.N."/>
            <person name="Lefkowitz E.J."/>
            <person name="Lu J."/>
            <person name="Matsushima P."/>
            <person name="McAhren S.M."/>
            <person name="McHenney M."/>
            <person name="McLeaster K."/>
            <person name="Mundy C.W."/>
            <person name="Nicas T.I."/>
            <person name="Norris F.H."/>
            <person name="O'Gara M."/>
            <person name="Peery R.B."/>
            <person name="Robertson G.T."/>
            <person name="Rockey P."/>
            <person name="Sun P.-M."/>
            <person name="Winkler M.E."/>
            <person name="Yang Y."/>
            <person name="Young-Bellido M."/>
            <person name="Zhao G."/>
            <person name="Zook C.A."/>
            <person name="Baltz R.H."/>
            <person name="Jaskunas S.R."/>
            <person name="Rosteck P.R. Jr."/>
            <person name="Skatrud P.L."/>
            <person name="Glass J.I."/>
        </authorList>
    </citation>
    <scope>NUCLEOTIDE SEQUENCE [LARGE SCALE GENOMIC DNA]</scope>
    <source>
        <strain>ATCC BAA-255 / R6</strain>
    </source>
</reference>
<organism>
    <name type="scientific">Streptococcus pneumoniae (strain ATCC BAA-255 / R6)</name>
    <dbReference type="NCBI Taxonomy" id="171101"/>
    <lineage>
        <taxon>Bacteria</taxon>
        <taxon>Bacillati</taxon>
        <taxon>Bacillota</taxon>
        <taxon>Bacilli</taxon>
        <taxon>Lactobacillales</taxon>
        <taxon>Streptococcaceae</taxon>
        <taxon>Streptococcus</taxon>
    </lineage>
</organism>
<accession>Q8DQH0</accession>
<protein>
    <recommendedName>
        <fullName evidence="1">S-adenosylmethionine synthase</fullName>
        <shortName evidence="1">AdoMet synthase</shortName>
        <ecNumber evidence="1">2.5.1.6</ecNumber>
    </recommendedName>
    <alternativeName>
        <fullName evidence="1">MAT</fullName>
    </alternativeName>
    <alternativeName>
        <fullName evidence="1">Methionine adenosyltransferase</fullName>
    </alternativeName>
</protein>
<sequence>MSERKLFTSESVSEGHPDKIADQISDAILDAILAKDPEAHVAAETAVYTGSVHVFGEISTNAYVDINRVVRDTIAEIGYTNTEYGFSAETVGVHPSLVEQSPDIAQGVNEALEVRGNADQDPLDLIGAGDQGLMFGFAVDETEELMPLPIALSHKLVRRLAELRKSGEISYLRPDAKSQVTVEYDENDRPVRVDTVVISTQHDPEATNEQIHQDVIDKVIKEVIPSSYLDDKTKFFINPTGRFVIGGPQGDSGLTGRKIIVDTYGGYSRHGGGAFSGKDATKVDRSASYAARYIAKNIVAAGLAKKAEVQLAYAIGVAQPVSVRIDTFGTGTVAESQLEKAARQIFDLRPAGIIQMLDLKRPIYRQTSAYGHMGRTDIDLPWERLDKVDALKEAVK</sequence>
<proteinExistence type="inferred from homology"/>
<dbReference type="EC" id="2.5.1.6" evidence="1"/>
<dbReference type="EMBL" id="AE007317">
    <property type="protein sequence ID" value="AAK99475.1"/>
    <property type="molecule type" value="Genomic_DNA"/>
</dbReference>
<dbReference type="PIR" id="G97955">
    <property type="entry name" value="G97955"/>
</dbReference>
<dbReference type="RefSeq" id="NP_358265.1">
    <property type="nucleotide sequence ID" value="NC_003098.1"/>
</dbReference>
<dbReference type="RefSeq" id="WP_000003935.1">
    <property type="nucleotide sequence ID" value="NC_003098.1"/>
</dbReference>
<dbReference type="SMR" id="Q8DQH0"/>
<dbReference type="STRING" id="171101.spr0671"/>
<dbReference type="KEGG" id="spr:spr0671"/>
<dbReference type="PATRIC" id="fig|171101.6.peg.743"/>
<dbReference type="eggNOG" id="COG0192">
    <property type="taxonomic scope" value="Bacteria"/>
</dbReference>
<dbReference type="HOGENOM" id="CLU_041802_1_1_9"/>
<dbReference type="UniPathway" id="UPA00315">
    <property type="reaction ID" value="UER00080"/>
</dbReference>
<dbReference type="Proteomes" id="UP000000586">
    <property type="component" value="Chromosome"/>
</dbReference>
<dbReference type="GO" id="GO:0005829">
    <property type="term" value="C:cytosol"/>
    <property type="evidence" value="ECO:0000318"/>
    <property type="project" value="GO_Central"/>
</dbReference>
<dbReference type="GO" id="GO:0005524">
    <property type="term" value="F:ATP binding"/>
    <property type="evidence" value="ECO:0007669"/>
    <property type="project" value="UniProtKB-UniRule"/>
</dbReference>
<dbReference type="GO" id="GO:0000287">
    <property type="term" value="F:magnesium ion binding"/>
    <property type="evidence" value="ECO:0007669"/>
    <property type="project" value="UniProtKB-UniRule"/>
</dbReference>
<dbReference type="GO" id="GO:0004478">
    <property type="term" value="F:methionine adenosyltransferase activity"/>
    <property type="evidence" value="ECO:0000318"/>
    <property type="project" value="GO_Central"/>
</dbReference>
<dbReference type="GO" id="GO:0006730">
    <property type="term" value="P:one-carbon metabolic process"/>
    <property type="evidence" value="ECO:0007669"/>
    <property type="project" value="UniProtKB-KW"/>
</dbReference>
<dbReference type="GO" id="GO:0006556">
    <property type="term" value="P:S-adenosylmethionine biosynthetic process"/>
    <property type="evidence" value="ECO:0000318"/>
    <property type="project" value="GO_Central"/>
</dbReference>
<dbReference type="CDD" id="cd18079">
    <property type="entry name" value="S-AdoMet_synt"/>
    <property type="match status" value="1"/>
</dbReference>
<dbReference type="FunFam" id="3.30.300.10:FF:000003">
    <property type="entry name" value="S-adenosylmethionine synthase"/>
    <property type="match status" value="1"/>
</dbReference>
<dbReference type="Gene3D" id="3.30.300.10">
    <property type="match status" value="3"/>
</dbReference>
<dbReference type="HAMAP" id="MF_00086">
    <property type="entry name" value="S_AdoMet_synth1"/>
    <property type="match status" value="1"/>
</dbReference>
<dbReference type="InterPro" id="IPR022631">
    <property type="entry name" value="ADOMET_SYNTHASE_CS"/>
</dbReference>
<dbReference type="InterPro" id="IPR022630">
    <property type="entry name" value="S-AdoMet_synt_C"/>
</dbReference>
<dbReference type="InterPro" id="IPR022629">
    <property type="entry name" value="S-AdoMet_synt_central"/>
</dbReference>
<dbReference type="InterPro" id="IPR022628">
    <property type="entry name" value="S-AdoMet_synt_N"/>
</dbReference>
<dbReference type="InterPro" id="IPR002133">
    <property type="entry name" value="S-AdoMet_synthetase"/>
</dbReference>
<dbReference type="InterPro" id="IPR022636">
    <property type="entry name" value="S-AdoMet_synthetase_sfam"/>
</dbReference>
<dbReference type="NCBIfam" id="TIGR01034">
    <property type="entry name" value="metK"/>
    <property type="match status" value="1"/>
</dbReference>
<dbReference type="PANTHER" id="PTHR11964">
    <property type="entry name" value="S-ADENOSYLMETHIONINE SYNTHETASE"/>
    <property type="match status" value="1"/>
</dbReference>
<dbReference type="Pfam" id="PF02773">
    <property type="entry name" value="S-AdoMet_synt_C"/>
    <property type="match status" value="1"/>
</dbReference>
<dbReference type="Pfam" id="PF02772">
    <property type="entry name" value="S-AdoMet_synt_M"/>
    <property type="match status" value="1"/>
</dbReference>
<dbReference type="Pfam" id="PF00438">
    <property type="entry name" value="S-AdoMet_synt_N"/>
    <property type="match status" value="1"/>
</dbReference>
<dbReference type="PIRSF" id="PIRSF000497">
    <property type="entry name" value="MAT"/>
    <property type="match status" value="1"/>
</dbReference>
<dbReference type="SUPFAM" id="SSF55973">
    <property type="entry name" value="S-adenosylmethionine synthetase"/>
    <property type="match status" value="3"/>
</dbReference>
<dbReference type="PROSITE" id="PS00376">
    <property type="entry name" value="ADOMET_SYNTHASE_1"/>
    <property type="match status" value="1"/>
</dbReference>
<dbReference type="PROSITE" id="PS00377">
    <property type="entry name" value="ADOMET_SYNTHASE_2"/>
    <property type="match status" value="1"/>
</dbReference>
<feature type="chain" id="PRO_0000174602" description="S-adenosylmethionine synthase">
    <location>
        <begin position="1"/>
        <end position="396"/>
    </location>
</feature>
<feature type="region of interest" description="Flexible loop" evidence="1">
    <location>
        <begin position="100"/>
        <end position="110"/>
    </location>
</feature>
<feature type="binding site" description="in other chain" evidence="1">
    <location>
        <position position="16"/>
    </location>
    <ligand>
        <name>ATP</name>
        <dbReference type="ChEBI" id="CHEBI:30616"/>
        <note>ligand shared between two neighboring subunits</note>
    </ligand>
</feature>
<feature type="binding site" evidence="1">
    <location>
        <position position="18"/>
    </location>
    <ligand>
        <name>Mg(2+)</name>
        <dbReference type="ChEBI" id="CHEBI:18420"/>
    </ligand>
</feature>
<feature type="binding site" evidence="1">
    <location>
        <position position="44"/>
    </location>
    <ligand>
        <name>K(+)</name>
        <dbReference type="ChEBI" id="CHEBI:29103"/>
    </ligand>
</feature>
<feature type="binding site" description="in other chain" evidence="1">
    <location>
        <position position="57"/>
    </location>
    <ligand>
        <name>L-methionine</name>
        <dbReference type="ChEBI" id="CHEBI:57844"/>
        <note>ligand shared between two neighboring subunits</note>
    </ligand>
</feature>
<feature type="binding site" description="in other chain" evidence="1">
    <location>
        <position position="100"/>
    </location>
    <ligand>
        <name>L-methionine</name>
        <dbReference type="ChEBI" id="CHEBI:57844"/>
        <note>ligand shared between two neighboring subunits</note>
    </ligand>
</feature>
<feature type="binding site" description="in other chain" evidence="1">
    <location>
        <begin position="175"/>
        <end position="177"/>
    </location>
    <ligand>
        <name>ATP</name>
        <dbReference type="ChEBI" id="CHEBI:30616"/>
        <note>ligand shared between two neighboring subunits</note>
    </ligand>
</feature>
<feature type="binding site" description="in other chain" evidence="1">
    <location>
        <begin position="242"/>
        <end position="243"/>
    </location>
    <ligand>
        <name>ATP</name>
        <dbReference type="ChEBI" id="CHEBI:30616"/>
        <note>ligand shared between two neighboring subunits</note>
    </ligand>
</feature>
<feature type="binding site" evidence="1">
    <location>
        <position position="251"/>
    </location>
    <ligand>
        <name>ATP</name>
        <dbReference type="ChEBI" id="CHEBI:30616"/>
        <note>ligand shared between two neighboring subunits</note>
    </ligand>
</feature>
<feature type="binding site" evidence="1">
    <location>
        <position position="251"/>
    </location>
    <ligand>
        <name>L-methionine</name>
        <dbReference type="ChEBI" id="CHEBI:57844"/>
        <note>ligand shared between two neighboring subunits</note>
    </ligand>
</feature>
<feature type="binding site" description="in other chain" evidence="1">
    <location>
        <begin position="257"/>
        <end position="258"/>
    </location>
    <ligand>
        <name>ATP</name>
        <dbReference type="ChEBI" id="CHEBI:30616"/>
        <note>ligand shared between two neighboring subunits</note>
    </ligand>
</feature>
<feature type="binding site" evidence="1">
    <location>
        <position position="274"/>
    </location>
    <ligand>
        <name>ATP</name>
        <dbReference type="ChEBI" id="CHEBI:30616"/>
        <note>ligand shared between two neighboring subunits</note>
    </ligand>
</feature>
<feature type="binding site" evidence="1">
    <location>
        <position position="278"/>
    </location>
    <ligand>
        <name>ATP</name>
        <dbReference type="ChEBI" id="CHEBI:30616"/>
        <note>ligand shared between two neighboring subunits</note>
    </ligand>
</feature>
<feature type="binding site" description="in other chain" evidence="1">
    <location>
        <position position="282"/>
    </location>
    <ligand>
        <name>L-methionine</name>
        <dbReference type="ChEBI" id="CHEBI:57844"/>
        <note>ligand shared between two neighboring subunits</note>
    </ligand>
</feature>
<gene>
    <name evidence="1" type="primary">metK</name>
    <name type="ordered locus">spr0671</name>
</gene>